<evidence type="ECO:0000250" key="1"/>
<evidence type="ECO:0000255" key="2"/>
<evidence type="ECO:0000255" key="3">
    <source>
        <dbReference type="PROSITE-ProRule" id="PRU00295"/>
    </source>
</evidence>
<evidence type="ECO:0000255" key="4">
    <source>
        <dbReference type="PROSITE-ProRule" id="PRU00460"/>
    </source>
</evidence>
<evidence type="ECO:0000255" key="5">
    <source>
        <dbReference type="PROSITE-ProRule" id="PRU00466"/>
    </source>
</evidence>
<evidence type="ECO:0000269" key="6">
    <source>
    </source>
</evidence>
<evidence type="ECO:0000303" key="7">
    <source ref="3"/>
</evidence>
<evidence type="ECO:0000303" key="8">
    <source ref="4"/>
</evidence>
<evidence type="ECO:0000305" key="9"/>
<sequence length="628" mass="70071">MGSCARLLLLWGCTVVAAGLSGVAGVSSRCEKACNPRMGNLALGRKLWADTTCGQNATELYCFYSENTDLTCRQPKCDKCNAAYPHLAHLPSAMADSSFRFPRTWWQSAEDVHREKIQLDLEAEFYFTHLIVMFKSPRPAAMVLDRSQDFGKTWKPYKYFATNCSATFGLEDDVVKKGAICTSKYSSPFPCTGGEVIFKALSPPYDTENPYSAKVQEQLKITNLRVQLLKRQSCPCQRNDLNEEPQHFTHYAIYDFIVKGSCFCNGHADQCIPVHGFRPVKAPGTFHMVHGKCMCKHNTAGSHCQHCAPLYNDRPWEAADGKTGAPNECRTCKCNGHADTCHFDVNVWEASGNRSGGVCDDCQHNTEGQYCQRCKPGFYRDLRRPFSAPDACKPCSCHPVGSAVLPANSVTFCDPSNGDCPCKPGVAGRRCDRCMVGYWGFGDYGCRPCDCAGSCDPITGDCISSHTDIDWYHEVPDFRPVHNKSEPAWEWEDAQGFSALLHSGKCECKEQTLGNAKAFCGMKYSYVLKIKILSAHDKGTHVEVNVKIKKVLKSTKLKIFRGKRTLYPESWTDRGCTCPILNPGLEYLVAGHEDIRTGKLIVNMKSFVQHWKPSLGRKVMDILKRECK</sequence>
<feature type="signal peptide" evidence="2">
    <location>
        <begin position="1"/>
        <end position="18"/>
    </location>
</feature>
<feature type="chain" id="PRO_0000042116" description="Netrin-4">
    <location>
        <begin position="19"/>
        <end position="628"/>
    </location>
</feature>
<feature type="domain" description="Laminin N-terminal" evidence="5">
    <location>
        <begin position="30"/>
        <end position="261"/>
    </location>
</feature>
<feature type="domain" description="Laminin EGF-like 1" evidence="4">
    <location>
        <begin position="262"/>
        <end position="331"/>
    </location>
</feature>
<feature type="domain" description="Laminin EGF-like 2" evidence="4">
    <location>
        <begin position="332"/>
        <end position="394"/>
    </location>
</feature>
<feature type="domain" description="Laminin EGF-like 3" evidence="4">
    <location>
        <begin position="395"/>
        <end position="448"/>
    </location>
</feature>
<feature type="domain" description="NTR" evidence="3">
    <location>
        <begin position="506"/>
        <end position="627"/>
    </location>
</feature>
<feature type="glycosylation site" description="N-linked (GlcNAc...) asparagine" evidence="2">
    <location>
        <position position="56"/>
    </location>
</feature>
<feature type="glycosylation site" description="N-linked (GlcNAc...) asparagine" evidence="2">
    <location>
        <position position="163"/>
    </location>
</feature>
<feature type="glycosylation site" description="N-linked (GlcNAc...) asparagine" evidence="2">
    <location>
        <position position="353"/>
    </location>
</feature>
<feature type="glycosylation site" description="N-linked (GlcNAc...) asparagine" evidence="2">
    <location>
        <position position="483"/>
    </location>
</feature>
<feature type="disulfide bond" evidence="1">
    <location>
        <begin position="262"/>
        <end position="271"/>
    </location>
</feature>
<feature type="disulfide bond" evidence="1">
    <location>
        <begin position="264"/>
        <end position="293"/>
    </location>
</feature>
<feature type="disulfide bond" evidence="1">
    <location>
        <begin position="295"/>
        <end position="304"/>
    </location>
</feature>
<feature type="disulfide bond" evidence="1">
    <location>
        <begin position="307"/>
        <end position="329"/>
    </location>
</feature>
<feature type="disulfide bond" evidence="1">
    <location>
        <begin position="332"/>
        <end position="341"/>
    </location>
</feature>
<feature type="disulfide bond" evidence="1">
    <location>
        <begin position="334"/>
        <end position="359"/>
    </location>
</feature>
<feature type="disulfide bond" evidence="1">
    <location>
        <begin position="362"/>
        <end position="371"/>
    </location>
</feature>
<feature type="disulfide bond" evidence="1">
    <location>
        <begin position="374"/>
        <end position="392"/>
    </location>
</feature>
<feature type="disulfide bond" evidence="1">
    <location>
        <begin position="395"/>
        <end position="413"/>
    </location>
</feature>
<feature type="disulfide bond" evidence="1">
    <location>
        <begin position="397"/>
        <end position="420"/>
    </location>
</feature>
<feature type="disulfide bond" evidence="1">
    <location>
        <begin position="422"/>
        <end position="431"/>
    </location>
</feature>
<feature type="disulfide bond" evidence="1">
    <location>
        <begin position="434"/>
        <end position="446"/>
    </location>
</feature>
<feature type="disulfide bond" evidence="1">
    <location>
        <begin position="506"/>
        <end position="576"/>
    </location>
</feature>
<feature type="disulfide bond" evidence="1">
    <location>
        <begin position="520"/>
        <end position="627"/>
    </location>
</feature>
<feature type="splice variant" id="VSP_015745" description="In isoform 3." evidence="7">
    <location>
        <begin position="1"/>
        <end position="37"/>
    </location>
</feature>
<feature type="splice variant" id="VSP_015746" description="In isoform 2." evidence="8">
    <location>
        <begin position="504"/>
        <end position="526"/>
    </location>
</feature>
<feature type="sequence variant" id="VAR_023548" description="In dbSNP:rs17288108.">
    <original>Y</original>
    <variation>H</variation>
    <location>
        <position position="205"/>
    </location>
</feature>
<feature type="sequence conflict" description="In Ref. 1; AAG30822." evidence="9" ref="1">
    <original>T</original>
    <variation>K</variation>
    <location>
        <position position="68"/>
    </location>
</feature>
<feature type="sequence conflict" description="In Ref. 3; AAF69670." evidence="9" ref="3">
    <original>A</original>
    <variation>G</variation>
    <location>
        <position position="161"/>
    </location>
</feature>
<feature type="sequence conflict" description="In Ref. 4; AAP92113." evidence="9" ref="4">
    <original>T</original>
    <variation>I</variation>
    <location>
        <position position="222"/>
    </location>
</feature>
<feature type="sequence conflict" description="In Ref. 1 and 4." evidence="9" ref="1 4">
    <original>T</original>
    <variation>A</variation>
    <location>
        <position position="331"/>
    </location>
</feature>
<feature type="sequence conflict" description="In Ref. 4; AAP92113." evidence="9" ref="4">
    <original>C</original>
    <variation>R</variation>
    <location>
        <position position="462"/>
    </location>
</feature>
<feature type="sequence conflict" description="In Ref. 1; AAG30822." evidence="9" ref="1">
    <original>Y</original>
    <variation>C</variation>
    <location>
        <position position="472"/>
    </location>
</feature>
<feature type="sequence conflict" description="In Ref. 4; AAP92113." evidence="9" ref="4">
    <original>Y</original>
    <variation>H</variation>
    <location>
        <position position="472"/>
    </location>
</feature>
<feature type="sequence conflict" description="In Ref. 4; AAP92113." evidence="9" ref="4">
    <original>N</original>
    <variation>S</variation>
    <location>
        <position position="545"/>
    </location>
</feature>
<protein>
    <recommendedName>
        <fullName>Netrin-4</fullName>
    </recommendedName>
    <alternativeName>
        <fullName>Beta-netrin</fullName>
    </alternativeName>
    <alternativeName>
        <fullName>Hepar-derived netrin-like protein</fullName>
    </alternativeName>
</protein>
<proteinExistence type="evidence at protein level"/>
<accession>Q9HB63</accession>
<accession>B2RNC2</accession>
<accession>Q658K9</accession>
<accession>Q7L3F1</accession>
<accession>Q7L9D6</accession>
<accession>Q7Z5B6</accession>
<accession>Q9BZP1</accession>
<accession>Q9NT44</accession>
<accession>Q9P133</accession>
<organism>
    <name type="scientific">Homo sapiens</name>
    <name type="common">Human</name>
    <dbReference type="NCBI Taxonomy" id="9606"/>
    <lineage>
        <taxon>Eukaryota</taxon>
        <taxon>Metazoa</taxon>
        <taxon>Chordata</taxon>
        <taxon>Craniata</taxon>
        <taxon>Vertebrata</taxon>
        <taxon>Euteleostomi</taxon>
        <taxon>Mammalia</taxon>
        <taxon>Eutheria</taxon>
        <taxon>Euarchontoglires</taxon>
        <taxon>Primates</taxon>
        <taxon>Haplorrhini</taxon>
        <taxon>Catarrhini</taxon>
        <taxon>Hominidae</taxon>
        <taxon>Homo</taxon>
    </lineage>
</organism>
<name>NET4_HUMAN</name>
<reference key="1">
    <citation type="journal article" date="2000" name="J. Cell Biol.">
        <title>A novel member of the netrin family, beta-netrin, shares homology with the beta chain of laminin. Identification, expression, and functional characterization.</title>
        <authorList>
            <person name="Koch M."/>
            <person name="Murrell J.R."/>
            <person name="Hunter D.D."/>
            <person name="Olson P.F."/>
            <person name="Jin W."/>
            <person name="Keene D.R."/>
            <person name="Brunken W.J."/>
            <person name="Burgeson R.E."/>
        </authorList>
    </citation>
    <scope>NUCLEOTIDE SEQUENCE [MRNA] (ISOFORM 1)</scope>
    <scope>FUNCTION</scope>
    <scope>SUBCELLULAR LOCATION</scope>
    <scope>TISSUE SPECIFICITY</scope>
</reference>
<reference key="2">
    <citation type="submission" date="2000-08" db="EMBL/GenBank/DDBJ databases">
        <title>Identification of a novel member of the netrin family, which is induced during in vitro mammary tubule morphogenesis.</title>
        <authorList>
            <person name="Niranjan B."/>
            <person name="Hohenester E."/>
            <person name="Slade M."/>
            <person name="Ali S."/>
            <person name="Kamalati T."/>
            <person name="Buluwela L."/>
        </authorList>
    </citation>
    <scope>NUCLEOTIDE SEQUENCE [MRNA] (ISOFORM 1)</scope>
</reference>
<reference key="3">
    <citation type="submission" date="2003-10" db="EMBL/GenBank/DDBJ databases">
        <title>Hetrin, an alternative splicing form of beta-netrin.</title>
        <authorList>
            <person name="Zhang C."/>
            <person name="Yu Y."/>
            <person name="Zhang S."/>
            <person name="Wei H."/>
            <person name="Zhang Y."/>
            <person name="Zhou G."/>
            <person name="Bi J."/>
            <person name="Liu M."/>
            <person name="He F."/>
        </authorList>
    </citation>
    <scope>NUCLEOTIDE SEQUENCE [MRNA] (ISOFORM 3)</scope>
    <source>
        <tissue>Fetal liver</tissue>
    </source>
</reference>
<reference key="4">
    <citation type="submission" date="2003-06" db="EMBL/GenBank/DDBJ databases">
        <authorList>
            <person name="Li H."/>
            <person name="Zhou G."/>
            <person name="Shen C."/>
            <person name="Li M."/>
            <person name="Xiao W."/>
            <person name="Zhong G."/>
            <person name="Zheng G."/>
            <person name="Yu R."/>
            <person name="Ke R."/>
            <person name="Zhong J."/>
            <person name="Huang F."/>
            <person name="Lin L."/>
            <person name="Yang S."/>
        </authorList>
    </citation>
    <scope>NUCLEOTIDE SEQUENCE [LARGE SCALE MRNA] (ISOFORM 2)</scope>
</reference>
<reference key="5">
    <citation type="submission" date="2005-07" db="EMBL/GenBank/DDBJ databases">
        <authorList>
            <person name="Mural R.J."/>
            <person name="Istrail S."/>
            <person name="Sutton G.G."/>
            <person name="Florea L."/>
            <person name="Halpern A.L."/>
            <person name="Mobarry C.M."/>
            <person name="Lippert R."/>
            <person name="Walenz B."/>
            <person name="Shatkay H."/>
            <person name="Dew I."/>
            <person name="Miller J.R."/>
            <person name="Flanigan M.J."/>
            <person name="Edwards N.J."/>
            <person name="Bolanos R."/>
            <person name="Fasulo D."/>
            <person name="Halldorsson B.V."/>
            <person name="Hannenhalli S."/>
            <person name="Turner R."/>
            <person name="Yooseph S."/>
            <person name="Lu F."/>
            <person name="Nusskern D.R."/>
            <person name="Shue B.C."/>
            <person name="Zheng X.H."/>
            <person name="Zhong F."/>
            <person name="Delcher A.L."/>
            <person name="Huson D.H."/>
            <person name="Kravitz S.A."/>
            <person name="Mouchard L."/>
            <person name="Reinert K."/>
            <person name="Remington K.A."/>
            <person name="Clark A.G."/>
            <person name="Waterman M.S."/>
            <person name="Eichler E.E."/>
            <person name="Adams M.D."/>
            <person name="Hunkapiller M.W."/>
            <person name="Myers E.W."/>
            <person name="Venter J.C."/>
        </authorList>
    </citation>
    <scope>NUCLEOTIDE SEQUENCE [LARGE SCALE GENOMIC DNA]</scope>
</reference>
<reference key="6">
    <citation type="journal article" date="2004" name="Genome Res.">
        <title>The status, quality, and expansion of the NIH full-length cDNA project: the Mammalian Gene Collection (MGC).</title>
        <authorList>
            <consortium name="The MGC Project Team"/>
        </authorList>
    </citation>
    <scope>NUCLEOTIDE SEQUENCE [LARGE SCALE MRNA] (ISOFORM 1)</scope>
    <scope>NUCLEOTIDE SEQUENCE [LARGE SCALE MRNA] OF 160-628 (ISOFORMS 1/3)</scope>
    <source>
        <tissue>Brain</tissue>
        <tissue>Lung</tissue>
    </source>
</reference>
<reference key="7">
    <citation type="journal article" date="2007" name="BMC Genomics">
        <title>The full-ORF clone resource of the German cDNA consortium.</title>
        <authorList>
            <person name="Bechtel S."/>
            <person name="Rosenfelder H."/>
            <person name="Duda A."/>
            <person name="Schmidt C.P."/>
            <person name="Ernst U."/>
            <person name="Wellenreuther R."/>
            <person name="Mehrle A."/>
            <person name="Schuster C."/>
            <person name="Bahr A."/>
            <person name="Bloecker H."/>
            <person name="Heubner D."/>
            <person name="Hoerlein A."/>
            <person name="Michel G."/>
            <person name="Wedler H."/>
            <person name="Koehrer K."/>
            <person name="Ottenwaelder B."/>
            <person name="Poustka A."/>
            <person name="Wiemann S."/>
            <person name="Schupp I."/>
        </authorList>
    </citation>
    <scope>NUCLEOTIDE SEQUENCE [LARGE SCALE MRNA] OF 50-628 (ISOFORMS 1/3)</scope>
    <source>
        <tissue>Stomach</tissue>
    </source>
</reference>
<reference key="8">
    <citation type="journal article" date="2004" name="Nat. Genet.">
        <title>Complete sequencing and characterization of 21,243 full-length human cDNAs.</title>
        <authorList>
            <person name="Ota T."/>
            <person name="Suzuki Y."/>
            <person name="Nishikawa T."/>
            <person name="Otsuki T."/>
            <person name="Sugiyama T."/>
            <person name="Irie R."/>
            <person name="Wakamatsu A."/>
            <person name="Hayashi K."/>
            <person name="Sato H."/>
            <person name="Nagai K."/>
            <person name="Kimura K."/>
            <person name="Makita H."/>
            <person name="Sekine M."/>
            <person name="Obayashi M."/>
            <person name="Nishi T."/>
            <person name="Shibahara T."/>
            <person name="Tanaka T."/>
            <person name="Ishii S."/>
            <person name="Yamamoto J."/>
            <person name="Saito K."/>
            <person name="Kawai Y."/>
            <person name="Isono Y."/>
            <person name="Nakamura Y."/>
            <person name="Nagahari K."/>
            <person name="Murakami K."/>
            <person name="Yasuda T."/>
            <person name="Iwayanagi T."/>
            <person name="Wagatsuma M."/>
            <person name="Shiratori A."/>
            <person name="Sudo H."/>
            <person name="Hosoiri T."/>
            <person name="Kaku Y."/>
            <person name="Kodaira H."/>
            <person name="Kondo H."/>
            <person name="Sugawara M."/>
            <person name="Takahashi M."/>
            <person name="Kanda K."/>
            <person name="Yokoi T."/>
            <person name="Furuya T."/>
            <person name="Kikkawa E."/>
            <person name="Omura Y."/>
            <person name="Abe K."/>
            <person name="Kamihara K."/>
            <person name="Katsuta N."/>
            <person name="Sato K."/>
            <person name="Tanikawa M."/>
            <person name="Yamazaki M."/>
            <person name="Ninomiya K."/>
            <person name="Ishibashi T."/>
            <person name="Yamashita H."/>
            <person name="Murakawa K."/>
            <person name="Fujimori K."/>
            <person name="Tanai H."/>
            <person name="Kimata M."/>
            <person name="Watanabe M."/>
            <person name="Hiraoka S."/>
            <person name="Chiba Y."/>
            <person name="Ishida S."/>
            <person name="Ono Y."/>
            <person name="Takiguchi S."/>
            <person name="Watanabe S."/>
            <person name="Yosida M."/>
            <person name="Hotuta T."/>
            <person name="Kusano J."/>
            <person name="Kanehori K."/>
            <person name="Takahashi-Fujii A."/>
            <person name="Hara H."/>
            <person name="Tanase T.-O."/>
            <person name="Nomura Y."/>
            <person name="Togiya S."/>
            <person name="Komai F."/>
            <person name="Hara R."/>
            <person name="Takeuchi K."/>
            <person name="Arita M."/>
            <person name="Imose N."/>
            <person name="Musashino K."/>
            <person name="Yuuki H."/>
            <person name="Oshima A."/>
            <person name="Sasaki N."/>
            <person name="Aotsuka S."/>
            <person name="Yoshikawa Y."/>
            <person name="Matsunawa H."/>
            <person name="Ichihara T."/>
            <person name="Shiohata N."/>
            <person name="Sano S."/>
            <person name="Moriya S."/>
            <person name="Momiyama H."/>
            <person name="Satoh N."/>
            <person name="Takami S."/>
            <person name="Terashima Y."/>
            <person name="Suzuki O."/>
            <person name="Nakagawa S."/>
            <person name="Senoh A."/>
            <person name="Mizoguchi H."/>
            <person name="Goto Y."/>
            <person name="Shimizu F."/>
            <person name="Wakebe H."/>
            <person name="Hishigaki H."/>
            <person name="Watanabe T."/>
            <person name="Sugiyama A."/>
            <person name="Takemoto M."/>
            <person name="Kawakami B."/>
            <person name="Yamazaki M."/>
            <person name="Watanabe K."/>
            <person name="Kumagai A."/>
            <person name="Itakura S."/>
            <person name="Fukuzumi Y."/>
            <person name="Fujimori Y."/>
            <person name="Komiyama M."/>
            <person name="Tashiro H."/>
            <person name="Tanigami A."/>
            <person name="Fujiwara T."/>
            <person name="Ono T."/>
            <person name="Yamada K."/>
            <person name="Fujii Y."/>
            <person name="Ozaki K."/>
            <person name="Hirao M."/>
            <person name="Ohmori Y."/>
            <person name="Kawabata A."/>
            <person name="Hikiji T."/>
            <person name="Kobatake N."/>
            <person name="Inagaki H."/>
            <person name="Ikema Y."/>
            <person name="Okamoto S."/>
            <person name="Okitani R."/>
            <person name="Kawakami T."/>
            <person name="Noguchi S."/>
            <person name="Itoh T."/>
            <person name="Shigeta K."/>
            <person name="Senba T."/>
            <person name="Matsumura K."/>
            <person name="Nakajima Y."/>
            <person name="Mizuno T."/>
            <person name="Morinaga M."/>
            <person name="Sasaki M."/>
            <person name="Togashi T."/>
            <person name="Oyama M."/>
            <person name="Hata H."/>
            <person name="Watanabe M."/>
            <person name="Komatsu T."/>
            <person name="Mizushima-Sugano J."/>
            <person name="Satoh T."/>
            <person name="Shirai Y."/>
            <person name="Takahashi Y."/>
            <person name="Nakagawa K."/>
            <person name="Okumura K."/>
            <person name="Nagase T."/>
            <person name="Nomura N."/>
            <person name="Kikuchi H."/>
            <person name="Masuho Y."/>
            <person name="Yamashita R."/>
            <person name="Nakai K."/>
            <person name="Yada T."/>
            <person name="Nakamura Y."/>
            <person name="Ohara O."/>
            <person name="Isogai T."/>
            <person name="Sugano S."/>
        </authorList>
    </citation>
    <scope>NUCLEOTIDE SEQUENCE [LARGE SCALE MRNA] OF 288-628 (ISOFORMS 1/3)</scope>
</reference>
<comment type="function">
    <text evidence="6">May play an important role in neural, kidney and vascular development. Promotes neurite elongation from olfactory bulb explants.</text>
</comment>
<comment type="subunit">
    <text>May form a homodimer.</text>
</comment>
<comment type="interaction">
    <interactant intactId="EBI-743459">
        <id>Q9HB63</id>
    </interactant>
    <interactant intactId="EBI-12007726">
        <id>O14936-4</id>
        <label>CASK</label>
    </interactant>
    <organismsDiffer>false</organismsDiffer>
    <experiments>3</experiments>
</comment>
<comment type="interaction">
    <interactant intactId="EBI-743459">
        <id>Q9HB63</id>
    </interactant>
    <interactant intactId="EBI-3867333">
        <id>A8MQ03</id>
        <label>CYSRT1</label>
    </interactant>
    <organismsDiffer>false</organismsDiffer>
    <experiments>3</experiments>
</comment>
<comment type="interaction">
    <interactant intactId="EBI-743459">
        <id>Q9HB63</id>
    </interactant>
    <interactant intactId="EBI-740785">
        <id>P49639</id>
        <label>HOXA1</label>
    </interactant>
    <organismsDiffer>false</organismsDiffer>
    <experiments>5</experiments>
</comment>
<comment type="interaction">
    <interactant intactId="EBI-743459">
        <id>Q9HB63</id>
    </interactant>
    <interactant intactId="EBI-10981970">
        <id>Q5T749</id>
        <label>KPRP</label>
    </interactant>
    <organismsDiffer>false</organismsDiffer>
    <experiments>3</experiments>
</comment>
<comment type="interaction">
    <interactant intactId="EBI-743459">
        <id>Q9HB63</id>
    </interactant>
    <interactant intactId="EBI-10171774">
        <id>P60410</id>
        <label>KRTAP10-8</label>
    </interactant>
    <organismsDiffer>false</organismsDiffer>
    <experiments>3</experiments>
</comment>
<comment type="interaction">
    <interactant intactId="EBI-743459">
        <id>Q9HB63</id>
    </interactant>
    <interactant intactId="EBI-18395721">
        <id>Q3LI59</id>
        <label>KRTAP21-2</label>
    </interactant>
    <organismsDiffer>false</organismsDiffer>
    <experiments>3</experiments>
</comment>
<comment type="interaction">
    <interactant intactId="EBI-743459">
        <id>Q9HB63</id>
    </interactant>
    <interactant intactId="EBI-3958099">
        <id>P26371</id>
        <label>KRTAP5-9</label>
    </interactant>
    <organismsDiffer>false</organismsDiffer>
    <experiments>4</experiments>
</comment>
<comment type="interaction">
    <interactant intactId="EBI-743459">
        <id>Q9HB63</id>
    </interactant>
    <interactant intactId="EBI-12224199">
        <id>Q5T751</id>
        <label>LCE1C</label>
    </interactant>
    <organismsDiffer>false</organismsDiffer>
    <experiments>3</experiments>
</comment>
<comment type="interaction">
    <interactant intactId="EBI-743459">
        <id>Q9HB63</id>
    </interactant>
    <interactant intactId="EBI-16439278">
        <id>Q6FHY5</id>
        <label>MEOX2</label>
    </interactant>
    <organismsDiffer>false</organismsDiffer>
    <experiments>3</experiments>
</comment>
<comment type="interaction">
    <interactant intactId="EBI-743459">
        <id>Q9HB63</id>
    </interactant>
    <interactant intactId="EBI-22310682">
        <id>P0DPK4</id>
        <label>NOTCH2NLC</label>
    </interactant>
    <organismsDiffer>false</organismsDiffer>
    <experiments>3</experiments>
</comment>
<comment type="interaction">
    <interactant intactId="EBI-743459">
        <id>Q9HB63</id>
    </interactant>
    <interactant intactId="EBI-716404">
        <id>P16284</id>
        <label>PECAM1</label>
    </interactant>
    <organismsDiffer>false</organismsDiffer>
    <experiments>3</experiments>
</comment>
<comment type="interaction">
    <interactant intactId="EBI-10310092">
        <id>Q9HB63-3</id>
    </interactant>
    <interactant intactId="EBI-3958099">
        <id>P26371</id>
        <label>KRTAP5-9</label>
    </interactant>
    <organismsDiffer>false</organismsDiffer>
    <experiments>3</experiments>
</comment>
<comment type="subcellular location">
    <subcellularLocation>
        <location evidence="6">Secreted</location>
        <location evidence="6">Extracellular space</location>
        <location evidence="6">Extracellular matrix</location>
        <location evidence="6">Basement membrane</location>
    </subcellularLocation>
    <text>Major component.</text>
</comment>
<comment type="alternative products">
    <event type="alternative splicing"/>
    <isoform>
        <id>Q9HB63-1</id>
        <name>1</name>
        <sequence type="displayed"/>
    </isoform>
    <isoform>
        <id>Q9HB63-2</id>
        <name>2</name>
        <sequence type="described" ref="VSP_015746"/>
    </isoform>
    <isoform>
        <id>Q9HB63-3</id>
        <name>3</name>
        <name>Hetrin</name>
        <sequence type="described" ref="VSP_015745"/>
    </isoform>
</comment>
<comment type="tissue specificity">
    <text evidence="6">Expressed in kidney, spleen, mammary gland, aorta, heart, ovary, prostate and fetal spleen.</text>
</comment>
<gene>
    <name type="primary">NTN4</name>
</gene>
<dbReference type="EMBL" id="AF278532">
    <property type="protein sequence ID" value="AAG30822.1"/>
    <property type="molecule type" value="mRNA"/>
</dbReference>
<dbReference type="EMBL" id="AF297711">
    <property type="protein sequence ID" value="AAG53651.1"/>
    <property type="molecule type" value="mRNA"/>
</dbReference>
<dbReference type="EMBL" id="AF119916">
    <property type="protein sequence ID" value="AAF69670.2"/>
    <property type="molecule type" value="mRNA"/>
</dbReference>
<dbReference type="EMBL" id="AY330211">
    <property type="protein sequence ID" value="AAP92113.1"/>
    <property type="molecule type" value="mRNA"/>
</dbReference>
<dbReference type="EMBL" id="AL137540">
    <property type="protein sequence ID" value="CAB70800.3"/>
    <property type="molecule type" value="mRNA"/>
</dbReference>
<dbReference type="EMBL" id="CH471054">
    <property type="protein sequence ID" value="EAW97544.1"/>
    <property type="molecule type" value="Genomic_DNA"/>
</dbReference>
<dbReference type="EMBL" id="BC013591">
    <property type="protein sequence ID" value="AAH13591.2"/>
    <property type="molecule type" value="mRNA"/>
</dbReference>
<dbReference type="EMBL" id="BC136798">
    <property type="protein sequence ID" value="AAI36799.1"/>
    <property type="molecule type" value="mRNA"/>
</dbReference>
<dbReference type="EMBL" id="BC136799">
    <property type="protein sequence ID" value="AAI36800.1"/>
    <property type="molecule type" value="mRNA"/>
</dbReference>
<dbReference type="EMBL" id="AL833767">
    <property type="protein sequence ID" value="CAH56243.1"/>
    <property type="molecule type" value="mRNA"/>
</dbReference>
<dbReference type="EMBL" id="AK024691">
    <property type="protein sequence ID" value="BAB14964.1"/>
    <property type="molecule type" value="mRNA"/>
</dbReference>
<dbReference type="CCDS" id="CCDS86324.1">
    <molecule id="Q9HB63-3"/>
</dbReference>
<dbReference type="CCDS" id="CCDS86325.1">
    <molecule id="Q9HB63-2"/>
</dbReference>
<dbReference type="CCDS" id="CCDS9054.1">
    <molecule id="Q9HB63-1"/>
</dbReference>
<dbReference type="PIR" id="T46383">
    <property type="entry name" value="T46383"/>
</dbReference>
<dbReference type="RefSeq" id="NP_001316629.1">
    <molecule id="Q9HB63-2"/>
    <property type="nucleotide sequence ID" value="NM_001329700.2"/>
</dbReference>
<dbReference type="RefSeq" id="NP_001316630.1">
    <molecule id="Q9HB63-3"/>
    <property type="nucleotide sequence ID" value="NM_001329701.2"/>
</dbReference>
<dbReference type="RefSeq" id="NP_001316631.1">
    <molecule id="Q9HB63-3"/>
    <property type="nucleotide sequence ID" value="NM_001329702.2"/>
</dbReference>
<dbReference type="RefSeq" id="NP_067052.2">
    <molecule id="Q9HB63-1"/>
    <property type="nucleotide sequence ID" value="NM_021229.4"/>
</dbReference>
<dbReference type="SMR" id="Q9HB63"/>
<dbReference type="BioGRID" id="121866">
    <property type="interactions" value="22"/>
</dbReference>
<dbReference type="DIP" id="DIP-46274N"/>
<dbReference type="FunCoup" id="Q9HB63">
    <property type="interactions" value="165"/>
</dbReference>
<dbReference type="IntAct" id="Q9HB63">
    <property type="interactions" value="20"/>
</dbReference>
<dbReference type="MINT" id="Q9HB63"/>
<dbReference type="STRING" id="9606.ENSP00000340998"/>
<dbReference type="GlyCosmos" id="Q9HB63">
    <property type="glycosylation" value="4 sites, No reported glycans"/>
</dbReference>
<dbReference type="GlyGen" id="Q9HB63">
    <property type="glycosylation" value="4 sites, 22 N-linked glycans (2 sites)"/>
</dbReference>
<dbReference type="iPTMnet" id="Q9HB63"/>
<dbReference type="PhosphoSitePlus" id="Q9HB63"/>
<dbReference type="BioMuta" id="NTN4"/>
<dbReference type="DMDM" id="76789662"/>
<dbReference type="jPOST" id="Q9HB63"/>
<dbReference type="MassIVE" id="Q9HB63"/>
<dbReference type="PaxDb" id="9606-ENSP00000340998"/>
<dbReference type="PeptideAtlas" id="Q9HB63"/>
<dbReference type="ProteomicsDB" id="81495">
    <molecule id="Q9HB63-1"/>
</dbReference>
<dbReference type="ProteomicsDB" id="81496">
    <molecule id="Q9HB63-2"/>
</dbReference>
<dbReference type="ProteomicsDB" id="81497">
    <molecule id="Q9HB63-3"/>
</dbReference>
<dbReference type="Antibodypedia" id="30131">
    <property type="antibodies" value="203 antibodies from 27 providers"/>
</dbReference>
<dbReference type="DNASU" id="59277"/>
<dbReference type="Ensembl" id="ENST00000343702.9">
    <molecule id="Q9HB63-1"/>
    <property type="protein sequence ID" value="ENSP00000340998.4"/>
    <property type="gene ID" value="ENSG00000074527.13"/>
</dbReference>
<dbReference type="Ensembl" id="ENST00000344911.8">
    <molecule id="Q9HB63-3"/>
    <property type="protein sequence ID" value="ENSP00000339436.4"/>
    <property type="gene ID" value="ENSG00000074527.13"/>
</dbReference>
<dbReference type="Ensembl" id="ENST00000538383.5">
    <molecule id="Q9HB63-3"/>
    <property type="protein sequence ID" value="ENSP00000444432.1"/>
    <property type="gene ID" value="ENSG00000074527.13"/>
</dbReference>
<dbReference type="Ensembl" id="ENST00000553059.1">
    <molecule id="Q9HB63-2"/>
    <property type="protein sequence ID" value="ENSP00000447292.1"/>
    <property type="gene ID" value="ENSG00000074527.13"/>
</dbReference>
<dbReference type="GeneID" id="59277"/>
<dbReference type="KEGG" id="hsa:59277"/>
<dbReference type="MANE-Select" id="ENST00000343702.9">
    <property type="protein sequence ID" value="ENSP00000340998.4"/>
    <property type="RefSeq nucleotide sequence ID" value="NM_021229.4"/>
    <property type="RefSeq protein sequence ID" value="NP_067052.2"/>
</dbReference>
<dbReference type="UCSC" id="uc001tei.3">
    <molecule id="Q9HB63-1"/>
    <property type="organism name" value="human"/>
</dbReference>
<dbReference type="AGR" id="HGNC:13658"/>
<dbReference type="CTD" id="59277"/>
<dbReference type="DisGeNET" id="59277"/>
<dbReference type="GeneCards" id="NTN4"/>
<dbReference type="HGNC" id="HGNC:13658">
    <property type="gene designation" value="NTN4"/>
</dbReference>
<dbReference type="HPA" id="ENSG00000074527">
    <property type="expression patterns" value="Tissue enhanced (lymphoid)"/>
</dbReference>
<dbReference type="MalaCards" id="NTN4"/>
<dbReference type="MIM" id="610401">
    <property type="type" value="gene"/>
</dbReference>
<dbReference type="neXtProt" id="NX_Q9HB63"/>
<dbReference type="OpenTargets" id="ENSG00000074527"/>
<dbReference type="PharmGKB" id="PA31815"/>
<dbReference type="VEuPathDB" id="HostDB:ENSG00000074527"/>
<dbReference type="eggNOG" id="KOG0994">
    <property type="taxonomic scope" value="Eukaryota"/>
</dbReference>
<dbReference type="GeneTree" id="ENSGT00940000156615"/>
<dbReference type="HOGENOM" id="CLU_016961_2_1_1"/>
<dbReference type="InParanoid" id="Q9HB63"/>
<dbReference type="OMA" id="WAWEDEQ"/>
<dbReference type="OrthoDB" id="9855268at2759"/>
<dbReference type="PAN-GO" id="Q9HB63">
    <property type="GO annotations" value="6 GO annotations based on evolutionary models"/>
</dbReference>
<dbReference type="PhylomeDB" id="Q9HB63"/>
<dbReference type="TreeFam" id="TF352481"/>
<dbReference type="PathwayCommons" id="Q9HB63"/>
<dbReference type="Reactome" id="R-HSA-3000171">
    <property type="pathway name" value="Non-integrin membrane-ECM interactions"/>
</dbReference>
<dbReference type="Reactome" id="R-HSA-373752">
    <property type="pathway name" value="Netrin-1 signaling"/>
</dbReference>
<dbReference type="SignaLink" id="Q9HB63"/>
<dbReference type="SIGNOR" id="Q9HB63"/>
<dbReference type="BioGRID-ORCS" id="59277">
    <property type="hits" value="11 hits in 1141 CRISPR screens"/>
</dbReference>
<dbReference type="ChiTaRS" id="NTN4">
    <property type="organism name" value="human"/>
</dbReference>
<dbReference type="GenomeRNAi" id="59277"/>
<dbReference type="Pharos" id="Q9HB63">
    <property type="development level" value="Tbio"/>
</dbReference>
<dbReference type="PRO" id="PR:Q9HB63"/>
<dbReference type="Proteomes" id="UP000005640">
    <property type="component" value="Chromosome 12"/>
</dbReference>
<dbReference type="RNAct" id="Q9HB63">
    <property type="molecule type" value="protein"/>
</dbReference>
<dbReference type="Bgee" id="ENSG00000074527">
    <property type="expression patterns" value="Expressed in kidney epithelium and 183 other cell types or tissues"/>
</dbReference>
<dbReference type="ExpressionAtlas" id="Q9HB63">
    <property type="expression patterns" value="baseline and differential"/>
</dbReference>
<dbReference type="GO" id="GO:0005576">
    <property type="term" value="C:extracellular region"/>
    <property type="evidence" value="ECO:0007669"/>
    <property type="project" value="UniProtKB-KW"/>
</dbReference>
<dbReference type="GO" id="GO:0043256">
    <property type="term" value="C:laminin complex"/>
    <property type="evidence" value="ECO:0000318"/>
    <property type="project" value="GO_Central"/>
</dbReference>
<dbReference type="GO" id="GO:0005886">
    <property type="term" value="C:plasma membrane"/>
    <property type="evidence" value="ECO:0000304"/>
    <property type="project" value="Reactome"/>
</dbReference>
<dbReference type="GO" id="GO:0043237">
    <property type="term" value="F:laminin-1 binding"/>
    <property type="evidence" value="ECO:0007669"/>
    <property type="project" value="Ensembl"/>
</dbReference>
<dbReference type="GO" id="GO:0009887">
    <property type="term" value="P:animal organ morphogenesis"/>
    <property type="evidence" value="ECO:0000318"/>
    <property type="project" value="GO_Central"/>
</dbReference>
<dbReference type="GO" id="GO:0007411">
    <property type="term" value="P:axon guidance"/>
    <property type="evidence" value="ECO:0000318"/>
    <property type="project" value="GO_Central"/>
</dbReference>
<dbReference type="GO" id="GO:0070831">
    <property type="term" value="P:basement membrane assembly"/>
    <property type="evidence" value="ECO:0000318"/>
    <property type="project" value="GO_Central"/>
</dbReference>
<dbReference type="GO" id="GO:0016477">
    <property type="term" value="P:cell migration"/>
    <property type="evidence" value="ECO:0000318"/>
    <property type="project" value="GO_Central"/>
</dbReference>
<dbReference type="GO" id="GO:0016322">
    <property type="term" value="P:neuron remodeling"/>
    <property type="evidence" value="ECO:0007669"/>
    <property type="project" value="Ensembl"/>
</dbReference>
<dbReference type="GO" id="GO:0060668">
    <property type="term" value="P:regulation of branching involved in salivary gland morphogenesis by extracellular matrix-epithelial cell signaling"/>
    <property type="evidence" value="ECO:0007669"/>
    <property type="project" value="Ensembl"/>
</dbReference>
<dbReference type="GO" id="GO:0034446">
    <property type="term" value="P:substrate adhesion-dependent cell spreading"/>
    <property type="evidence" value="ECO:0000318"/>
    <property type="project" value="GO_Central"/>
</dbReference>
<dbReference type="GO" id="GO:0009888">
    <property type="term" value="P:tissue development"/>
    <property type="evidence" value="ECO:0000318"/>
    <property type="project" value="GO_Central"/>
</dbReference>
<dbReference type="CDD" id="cd00055">
    <property type="entry name" value="EGF_Lam"/>
    <property type="match status" value="3"/>
</dbReference>
<dbReference type="CDD" id="cd03578">
    <property type="entry name" value="NTR_netrin-4_like"/>
    <property type="match status" value="1"/>
</dbReference>
<dbReference type="FunFam" id="2.170.300.10:FF:000001">
    <property type="entry name" value="Laminin subunit beta-1"/>
    <property type="match status" value="1"/>
</dbReference>
<dbReference type="FunFam" id="2.10.25.10:FF:000200">
    <property type="entry name" value="netrin-4 isoform X1"/>
    <property type="match status" value="1"/>
</dbReference>
<dbReference type="FunFam" id="2.40.50.120:FF:000002">
    <property type="entry name" value="netrin-4 isoform X1"/>
    <property type="match status" value="1"/>
</dbReference>
<dbReference type="FunFam" id="2.60.120.260:FF:000048">
    <property type="entry name" value="netrin-4 isoform X1"/>
    <property type="match status" value="1"/>
</dbReference>
<dbReference type="FunFam" id="2.10.25.10:FF:000333">
    <property type="entry name" value="netrin-4 isoform X2"/>
    <property type="match status" value="1"/>
</dbReference>
<dbReference type="Gene3D" id="2.40.50.120">
    <property type="match status" value="1"/>
</dbReference>
<dbReference type="Gene3D" id="2.60.120.260">
    <property type="entry name" value="Galactose-binding domain-like"/>
    <property type="match status" value="1"/>
</dbReference>
<dbReference type="Gene3D" id="2.10.25.10">
    <property type="entry name" value="Laminin"/>
    <property type="match status" value="2"/>
</dbReference>
<dbReference type="InterPro" id="IPR050440">
    <property type="entry name" value="Laminin/Netrin_ECM"/>
</dbReference>
<dbReference type="InterPro" id="IPR008211">
    <property type="entry name" value="Laminin_N"/>
</dbReference>
<dbReference type="InterPro" id="IPR002049">
    <property type="entry name" value="LE_dom"/>
</dbReference>
<dbReference type="InterPro" id="IPR056863">
    <property type="entry name" value="LMN_ATRN_NET-like_EGF"/>
</dbReference>
<dbReference type="InterPro" id="IPR035811">
    <property type="entry name" value="Netrin-4_NTR"/>
</dbReference>
<dbReference type="InterPro" id="IPR001134">
    <property type="entry name" value="Netrin_domain"/>
</dbReference>
<dbReference type="InterPro" id="IPR018933">
    <property type="entry name" value="Netrin_module_non-TIMP"/>
</dbReference>
<dbReference type="InterPro" id="IPR008993">
    <property type="entry name" value="TIMP-like_OB-fold"/>
</dbReference>
<dbReference type="PANTHER" id="PTHR10574:SF282">
    <property type="entry name" value="NETRIN-4"/>
    <property type="match status" value="1"/>
</dbReference>
<dbReference type="PANTHER" id="PTHR10574">
    <property type="entry name" value="NETRIN/LAMININ-RELATED"/>
    <property type="match status" value="1"/>
</dbReference>
<dbReference type="Pfam" id="PF00053">
    <property type="entry name" value="EGF_laminin"/>
    <property type="match status" value="2"/>
</dbReference>
<dbReference type="Pfam" id="PF24973">
    <property type="entry name" value="EGF_LMN_ATRN"/>
    <property type="match status" value="1"/>
</dbReference>
<dbReference type="Pfam" id="PF00055">
    <property type="entry name" value="Laminin_N"/>
    <property type="match status" value="1"/>
</dbReference>
<dbReference type="Pfam" id="PF01759">
    <property type="entry name" value="NTR"/>
    <property type="match status" value="1"/>
</dbReference>
<dbReference type="PRINTS" id="PR00011">
    <property type="entry name" value="EGFLAMININ"/>
</dbReference>
<dbReference type="SMART" id="SM00643">
    <property type="entry name" value="C345C"/>
    <property type="match status" value="1"/>
</dbReference>
<dbReference type="SMART" id="SM00180">
    <property type="entry name" value="EGF_Lam"/>
    <property type="match status" value="3"/>
</dbReference>
<dbReference type="SMART" id="SM00136">
    <property type="entry name" value="LamNT"/>
    <property type="match status" value="1"/>
</dbReference>
<dbReference type="SUPFAM" id="SSF57196">
    <property type="entry name" value="EGF/Laminin"/>
    <property type="match status" value="3"/>
</dbReference>
<dbReference type="SUPFAM" id="SSF50242">
    <property type="entry name" value="TIMP-like"/>
    <property type="match status" value="1"/>
</dbReference>
<dbReference type="PROSITE" id="PS00022">
    <property type="entry name" value="EGF_1"/>
    <property type="match status" value="2"/>
</dbReference>
<dbReference type="PROSITE" id="PS01248">
    <property type="entry name" value="EGF_LAM_1"/>
    <property type="match status" value="2"/>
</dbReference>
<dbReference type="PROSITE" id="PS50027">
    <property type="entry name" value="EGF_LAM_2"/>
    <property type="match status" value="3"/>
</dbReference>
<dbReference type="PROSITE" id="PS51117">
    <property type="entry name" value="LAMININ_NTER"/>
    <property type="match status" value="1"/>
</dbReference>
<dbReference type="PROSITE" id="PS50189">
    <property type="entry name" value="NTR"/>
    <property type="match status" value="1"/>
</dbReference>
<keyword id="KW-0025">Alternative splicing</keyword>
<keyword id="KW-0084">Basement membrane</keyword>
<keyword id="KW-1015">Disulfide bond</keyword>
<keyword id="KW-0272">Extracellular matrix</keyword>
<keyword id="KW-0325">Glycoprotein</keyword>
<keyword id="KW-0424">Laminin EGF-like domain</keyword>
<keyword id="KW-1267">Proteomics identification</keyword>
<keyword id="KW-1185">Reference proteome</keyword>
<keyword id="KW-0677">Repeat</keyword>
<keyword id="KW-0964">Secreted</keyword>
<keyword id="KW-0732">Signal</keyword>